<gene>
    <name evidence="1" type="primary">rpsS</name>
    <name type="ordered locus">XC_3336</name>
</gene>
<feature type="chain" id="PRO_0000265463" description="Small ribosomal subunit protein uS19">
    <location>
        <begin position="1"/>
        <end position="89"/>
    </location>
</feature>
<sequence>MARSLKKGPFVDHHLAKKVESAAGSKKPIKTWSRRSMILPEMVGITIAVHNGKNHIPVLVNENMVGHKLGEFAVTRTFKGHGGDKKSSR</sequence>
<dbReference type="EMBL" id="CP000050">
    <property type="protein sequence ID" value="AAY50380.1"/>
    <property type="molecule type" value="Genomic_DNA"/>
</dbReference>
<dbReference type="RefSeq" id="WP_005993369.1">
    <property type="nucleotide sequence ID" value="NZ_CP155948.1"/>
</dbReference>
<dbReference type="SMR" id="Q4URE3"/>
<dbReference type="GeneID" id="97210508"/>
<dbReference type="KEGG" id="xcb:XC_3336"/>
<dbReference type="HOGENOM" id="CLU_144911_0_1_6"/>
<dbReference type="Proteomes" id="UP000000420">
    <property type="component" value="Chromosome"/>
</dbReference>
<dbReference type="GO" id="GO:0005737">
    <property type="term" value="C:cytoplasm"/>
    <property type="evidence" value="ECO:0007669"/>
    <property type="project" value="UniProtKB-ARBA"/>
</dbReference>
<dbReference type="GO" id="GO:0015935">
    <property type="term" value="C:small ribosomal subunit"/>
    <property type="evidence" value="ECO:0007669"/>
    <property type="project" value="InterPro"/>
</dbReference>
<dbReference type="GO" id="GO:0019843">
    <property type="term" value="F:rRNA binding"/>
    <property type="evidence" value="ECO:0007669"/>
    <property type="project" value="UniProtKB-UniRule"/>
</dbReference>
<dbReference type="GO" id="GO:0003735">
    <property type="term" value="F:structural constituent of ribosome"/>
    <property type="evidence" value="ECO:0007669"/>
    <property type="project" value="InterPro"/>
</dbReference>
<dbReference type="GO" id="GO:0000028">
    <property type="term" value="P:ribosomal small subunit assembly"/>
    <property type="evidence" value="ECO:0007669"/>
    <property type="project" value="TreeGrafter"/>
</dbReference>
<dbReference type="GO" id="GO:0006412">
    <property type="term" value="P:translation"/>
    <property type="evidence" value="ECO:0007669"/>
    <property type="project" value="UniProtKB-UniRule"/>
</dbReference>
<dbReference type="FunFam" id="3.30.860.10:FF:000001">
    <property type="entry name" value="30S ribosomal protein S19"/>
    <property type="match status" value="1"/>
</dbReference>
<dbReference type="Gene3D" id="3.30.860.10">
    <property type="entry name" value="30s Ribosomal Protein S19, Chain A"/>
    <property type="match status" value="1"/>
</dbReference>
<dbReference type="HAMAP" id="MF_00531">
    <property type="entry name" value="Ribosomal_uS19"/>
    <property type="match status" value="1"/>
</dbReference>
<dbReference type="InterPro" id="IPR002222">
    <property type="entry name" value="Ribosomal_uS19"/>
</dbReference>
<dbReference type="InterPro" id="IPR005732">
    <property type="entry name" value="Ribosomal_uS19_bac-type"/>
</dbReference>
<dbReference type="InterPro" id="IPR020934">
    <property type="entry name" value="Ribosomal_uS19_CS"/>
</dbReference>
<dbReference type="InterPro" id="IPR023575">
    <property type="entry name" value="Ribosomal_uS19_SF"/>
</dbReference>
<dbReference type="NCBIfam" id="TIGR01050">
    <property type="entry name" value="rpsS_bact"/>
    <property type="match status" value="1"/>
</dbReference>
<dbReference type="PANTHER" id="PTHR11880">
    <property type="entry name" value="RIBOSOMAL PROTEIN S19P FAMILY MEMBER"/>
    <property type="match status" value="1"/>
</dbReference>
<dbReference type="PANTHER" id="PTHR11880:SF8">
    <property type="entry name" value="SMALL RIBOSOMAL SUBUNIT PROTEIN US19M"/>
    <property type="match status" value="1"/>
</dbReference>
<dbReference type="Pfam" id="PF00203">
    <property type="entry name" value="Ribosomal_S19"/>
    <property type="match status" value="1"/>
</dbReference>
<dbReference type="PIRSF" id="PIRSF002144">
    <property type="entry name" value="Ribosomal_S19"/>
    <property type="match status" value="1"/>
</dbReference>
<dbReference type="PRINTS" id="PR00975">
    <property type="entry name" value="RIBOSOMALS19"/>
</dbReference>
<dbReference type="SUPFAM" id="SSF54570">
    <property type="entry name" value="Ribosomal protein S19"/>
    <property type="match status" value="1"/>
</dbReference>
<dbReference type="PROSITE" id="PS00323">
    <property type="entry name" value="RIBOSOMAL_S19"/>
    <property type="match status" value="1"/>
</dbReference>
<keyword id="KW-0687">Ribonucleoprotein</keyword>
<keyword id="KW-0689">Ribosomal protein</keyword>
<keyword id="KW-0694">RNA-binding</keyword>
<keyword id="KW-0699">rRNA-binding</keyword>
<protein>
    <recommendedName>
        <fullName evidence="1">Small ribosomal subunit protein uS19</fullName>
    </recommendedName>
    <alternativeName>
        <fullName evidence="2">30S ribosomal protein S19</fullName>
    </alternativeName>
</protein>
<name>RS19_XANC8</name>
<proteinExistence type="inferred from homology"/>
<comment type="function">
    <text evidence="1">Protein S19 forms a complex with S13 that binds strongly to the 16S ribosomal RNA.</text>
</comment>
<comment type="similarity">
    <text evidence="1">Belongs to the universal ribosomal protein uS19 family.</text>
</comment>
<evidence type="ECO:0000255" key="1">
    <source>
        <dbReference type="HAMAP-Rule" id="MF_00531"/>
    </source>
</evidence>
<evidence type="ECO:0000305" key="2"/>
<reference key="1">
    <citation type="journal article" date="2005" name="Genome Res.">
        <title>Comparative and functional genomic analyses of the pathogenicity of phytopathogen Xanthomonas campestris pv. campestris.</title>
        <authorList>
            <person name="Qian W."/>
            <person name="Jia Y."/>
            <person name="Ren S.-X."/>
            <person name="He Y.-Q."/>
            <person name="Feng J.-X."/>
            <person name="Lu L.-F."/>
            <person name="Sun Q."/>
            <person name="Ying G."/>
            <person name="Tang D.-J."/>
            <person name="Tang H."/>
            <person name="Wu W."/>
            <person name="Hao P."/>
            <person name="Wang L."/>
            <person name="Jiang B.-L."/>
            <person name="Zeng S."/>
            <person name="Gu W.-Y."/>
            <person name="Lu G."/>
            <person name="Rong L."/>
            <person name="Tian Y."/>
            <person name="Yao Z."/>
            <person name="Fu G."/>
            <person name="Chen B."/>
            <person name="Fang R."/>
            <person name="Qiang B."/>
            <person name="Chen Z."/>
            <person name="Zhao G.-P."/>
            <person name="Tang J.-L."/>
            <person name="He C."/>
        </authorList>
    </citation>
    <scope>NUCLEOTIDE SEQUENCE [LARGE SCALE GENOMIC DNA]</scope>
    <source>
        <strain>8004</strain>
    </source>
</reference>
<accession>Q4URE3</accession>
<organism>
    <name type="scientific">Xanthomonas campestris pv. campestris (strain 8004)</name>
    <dbReference type="NCBI Taxonomy" id="314565"/>
    <lineage>
        <taxon>Bacteria</taxon>
        <taxon>Pseudomonadati</taxon>
        <taxon>Pseudomonadota</taxon>
        <taxon>Gammaproteobacteria</taxon>
        <taxon>Lysobacterales</taxon>
        <taxon>Lysobacteraceae</taxon>
        <taxon>Xanthomonas</taxon>
    </lineage>
</organism>